<gene>
    <name evidence="1" type="primary">aroC</name>
    <name type="ordered locus">CTL0622</name>
</gene>
<reference key="1">
    <citation type="journal article" date="2008" name="Genome Res.">
        <title>Chlamydia trachomatis: genome sequence analysis of lymphogranuloma venereum isolates.</title>
        <authorList>
            <person name="Thomson N.R."/>
            <person name="Holden M.T.G."/>
            <person name="Carder C."/>
            <person name="Lennard N."/>
            <person name="Lockey S.J."/>
            <person name="Marsh P."/>
            <person name="Skipp P."/>
            <person name="O'Connor C.D."/>
            <person name="Goodhead I."/>
            <person name="Norbertzcak H."/>
            <person name="Harris B."/>
            <person name="Ormond D."/>
            <person name="Rance R."/>
            <person name="Quail M.A."/>
            <person name="Parkhill J."/>
            <person name="Stephens R.S."/>
            <person name="Clarke I.N."/>
        </authorList>
    </citation>
    <scope>NUCLEOTIDE SEQUENCE [LARGE SCALE GENOMIC DNA]</scope>
    <source>
        <strain>ATCC VR-902B / DSM 19102 / 434/Bu</strain>
    </source>
</reference>
<accession>B0B7T7</accession>
<protein>
    <recommendedName>
        <fullName evidence="1">Chorismate synthase</fullName>
        <shortName evidence="1">CS</shortName>
        <ecNumber evidence="1">4.2.3.5</ecNumber>
    </recommendedName>
    <alternativeName>
        <fullName evidence="1">5-enolpyruvylshikimate-3-phosphate phospholyase</fullName>
    </alternativeName>
</protein>
<evidence type="ECO:0000255" key="1">
    <source>
        <dbReference type="HAMAP-Rule" id="MF_00300"/>
    </source>
</evidence>
<name>AROC_CHLT2</name>
<organism>
    <name type="scientific">Chlamydia trachomatis serovar L2 (strain ATCC VR-902B / DSM 19102 / 434/Bu)</name>
    <dbReference type="NCBI Taxonomy" id="471472"/>
    <lineage>
        <taxon>Bacteria</taxon>
        <taxon>Pseudomonadati</taxon>
        <taxon>Chlamydiota</taxon>
        <taxon>Chlamydiia</taxon>
        <taxon>Chlamydiales</taxon>
        <taxon>Chlamydiaceae</taxon>
        <taxon>Chlamydia/Chlamydophila group</taxon>
        <taxon>Chlamydia</taxon>
    </lineage>
</organism>
<dbReference type="EC" id="4.2.3.5" evidence="1"/>
<dbReference type="EMBL" id="AM884176">
    <property type="protein sequence ID" value="CAP04063.1"/>
    <property type="molecule type" value="Genomic_DNA"/>
</dbReference>
<dbReference type="RefSeq" id="WP_009873760.1">
    <property type="nucleotide sequence ID" value="NC_010287.1"/>
</dbReference>
<dbReference type="RefSeq" id="YP_001654697.1">
    <property type="nucleotide sequence ID" value="NC_010287.1"/>
</dbReference>
<dbReference type="SMR" id="B0B7T7"/>
<dbReference type="KEGG" id="ctb:CTL0622"/>
<dbReference type="PATRIC" id="fig|471472.4.peg.671"/>
<dbReference type="HOGENOM" id="CLU_034547_0_0_0"/>
<dbReference type="UniPathway" id="UPA00053">
    <property type="reaction ID" value="UER00090"/>
</dbReference>
<dbReference type="Proteomes" id="UP001154402">
    <property type="component" value="Chromosome"/>
</dbReference>
<dbReference type="GO" id="GO:0005829">
    <property type="term" value="C:cytosol"/>
    <property type="evidence" value="ECO:0007669"/>
    <property type="project" value="TreeGrafter"/>
</dbReference>
<dbReference type="GO" id="GO:0004107">
    <property type="term" value="F:chorismate synthase activity"/>
    <property type="evidence" value="ECO:0007669"/>
    <property type="project" value="UniProtKB-UniRule"/>
</dbReference>
<dbReference type="GO" id="GO:0010181">
    <property type="term" value="F:FMN binding"/>
    <property type="evidence" value="ECO:0007669"/>
    <property type="project" value="TreeGrafter"/>
</dbReference>
<dbReference type="GO" id="GO:0008652">
    <property type="term" value="P:amino acid biosynthetic process"/>
    <property type="evidence" value="ECO:0007669"/>
    <property type="project" value="UniProtKB-KW"/>
</dbReference>
<dbReference type="GO" id="GO:0009073">
    <property type="term" value="P:aromatic amino acid family biosynthetic process"/>
    <property type="evidence" value="ECO:0007669"/>
    <property type="project" value="UniProtKB-KW"/>
</dbReference>
<dbReference type="GO" id="GO:0009423">
    <property type="term" value="P:chorismate biosynthetic process"/>
    <property type="evidence" value="ECO:0007669"/>
    <property type="project" value="UniProtKB-UniRule"/>
</dbReference>
<dbReference type="CDD" id="cd07304">
    <property type="entry name" value="Chorismate_synthase"/>
    <property type="match status" value="1"/>
</dbReference>
<dbReference type="FunFam" id="3.60.150.10:FF:000002">
    <property type="entry name" value="Chorismate synthase"/>
    <property type="match status" value="1"/>
</dbReference>
<dbReference type="Gene3D" id="3.60.150.10">
    <property type="entry name" value="Chorismate synthase AroC"/>
    <property type="match status" value="1"/>
</dbReference>
<dbReference type="HAMAP" id="MF_00300">
    <property type="entry name" value="Chorismate_synth"/>
    <property type="match status" value="1"/>
</dbReference>
<dbReference type="InterPro" id="IPR000453">
    <property type="entry name" value="Chorismate_synth"/>
</dbReference>
<dbReference type="InterPro" id="IPR035904">
    <property type="entry name" value="Chorismate_synth_AroC_sf"/>
</dbReference>
<dbReference type="InterPro" id="IPR020541">
    <property type="entry name" value="Chorismate_synthase_CS"/>
</dbReference>
<dbReference type="NCBIfam" id="TIGR00033">
    <property type="entry name" value="aroC"/>
    <property type="match status" value="1"/>
</dbReference>
<dbReference type="NCBIfam" id="NF003793">
    <property type="entry name" value="PRK05382.1"/>
    <property type="match status" value="1"/>
</dbReference>
<dbReference type="PANTHER" id="PTHR21085">
    <property type="entry name" value="CHORISMATE SYNTHASE"/>
    <property type="match status" value="1"/>
</dbReference>
<dbReference type="PANTHER" id="PTHR21085:SF0">
    <property type="entry name" value="CHORISMATE SYNTHASE"/>
    <property type="match status" value="1"/>
</dbReference>
<dbReference type="Pfam" id="PF01264">
    <property type="entry name" value="Chorismate_synt"/>
    <property type="match status" value="1"/>
</dbReference>
<dbReference type="PIRSF" id="PIRSF001456">
    <property type="entry name" value="Chorismate_synth"/>
    <property type="match status" value="1"/>
</dbReference>
<dbReference type="SUPFAM" id="SSF103263">
    <property type="entry name" value="Chorismate synthase, AroC"/>
    <property type="match status" value="1"/>
</dbReference>
<dbReference type="PROSITE" id="PS00787">
    <property type="entry name" value="CHORISMATE_SYNTHASE_1"/>
    <property type="match status" value="1"/>
</dbReference>
<dbReference type="PROSITE" id="PS00788">
    <property type="entry name" value="CHORISMATE_SYNTHASE_2"/>
    <property type="match status" value="1"/>
</dbReference>
<dbReference type="PROSITE" id="PS00789">
    <property type="entry name" value="CHORISMATE_SYNTHASE_3"/>
    <property type="match status" value="1"/>
</dbReference>
<sequence length="357" mass="37901">MHNQYGSIFSITTWGESHGPAIGVVIDGCPAGLSLSPEDFLPAMARRRPGQLHTSPRQEPDLVTILSGVYQNKTTGTPISLLIENKDVSSSSYEHLQHCYRPGHAQFAYEGKYGFADNRGGGRASARETASRVAAGVIAKKILLSQGIETLAFLSGFGTLESKNYPKLSDSLIQQVHTSPFYTLLPQEEIQNLLLLNPDDSFGGVVSFITSPLPIGLGEPVFGKLPALLAAGMMSIPAAKGFEIGAGFSSSQMTGSAYLDAFIADESGVSLQSNRCGGALGGISIGQPLEGRVAFKPTSSIKKPCSSVLKDGTPIAYRTPNQGRHDPCVAIRAVAVVEAMLDLTLVDLLLQHRCTQL</sequence>
<proteinExistence type="inferred from homology"/>
<feature type="chain" id="PRO_1000115342" description="Chorismate synthase">
    <location>
        <begin position="1"/>
        <end position="357"/>
    </location>
</feature>
<feature type="binding site" evidence="1">
    <location>
        <position position="47"/>
    </location>
    <ligand>
        <name>NADP(+)</name>
        <dbReference type="ChEBI" id="CHEBI:58349"/>
    </ligand>
</feature>
<feature type="binding site" evidence="1">
    <location>
        <begin position="123"/>
        <end position="125"/>
    </location>
    <ligand>
        <name>FMN</name>
        <dbReference type="ChEBI" id="CHEBI:58210"/>
    </ligand>
</feature>
<feature type="binding site" evidence="1">
    <location>
        <position position="281"/>
    </location>
    <ligand>
        <name>FMN</name>
        <dbReference type="ChEBI" id="CHEBI:58210"/>
    </ligand>
</feature>
<feature type="binding site" evidence="1">
    <location>
        <begin position="296"/>
        <end position="300"/>
    </location>
    <ligand>
        <name>FMN</name>
        <dbReference type="ChEBI" id="CHEBI:58210"/>
    </ligand>
</feature>
<feature type="binding site" evidence="1">
    <location>
        <position position="324"/>
    </location>
    <ligand>
        <name>FMN</name>
        <dbReference type="ChEBI" id="CHEBI:58210"/>
    </ligand>
</feature>
<comment type="function">
    <text evidence="1">Catalyzes the anti-1,4-elimination of the C-3 phosphate and the C-6 proR hydrogen from 5-enolpyruvylshikimate-3-phosphate (EPSP) to yield chorismate, which is the branch point compound that serves as the starting substrate for the three terminal pathways of aromatic amino acid biosynthesis. This reaction introduces a second double bond into the aromatic ring system.</text>
</comment>
<comment type="catalytic activity">
    <reaction evidence="1">
        <text>5-O-(1-carboxyvinyl)-3-phosphoshikimate = chorismate + phosphate</text>
        <dbReference type="Rhea" id="RHEA:21020"/>
        <dbReference type="ChEBI" id="CHEBI:29748"/>
        <dbReference type="ChEBI" id="CHEBI:43474"/>
        <dbReference type="ChEBI" id="CHEBI:57701"/>
        <dbReference type="EC" id="4.2.3.5"/>
    </reaction>
</comment>
<comment type="cofactor">
    <cofactor evidence="1">
        <name>FMNH2</name>
        <dbReference type="ChEBI" id="CHEBI:57618"/>
    </cofactor>
    <text evidence="1">Reduced FMN (FMNH(2)).</text>
</comment>
<comment type="pathway">
    <text evidence="1">Metabolic intermediate biosynthesis; chorismate biosynthesis; chorismate from D-erythrose 4-phosphate and phosphoenolpyruvate: step 7/7.</text>
</comment>
<comment type="subunit">
    <text evidence="1">Homotetramer.</text>
</comment>
<comment type="similarity">
    <text evidence="1">Belongs to the chorismate synthase family.</text>
</comment>
<keyword id="KW-0028">Amino-acid biosynthesis</keyword>
<keyword id="KW-0057">Aromatic amino acid biosynthesis</keyword>
<keyword id="KW-0274">FAD</keyword>
<keyword id="KW-0285">Flavoprotein</keyword>
<keyword id="KW-0288">FMN</keyword>
<keyword id="KW-0456">Lyase</keyword>
<keyword id="KW-0521">NADP</keyword>